<name>XPT_AGARV</name>
<reference key="1">
    <citation type="journal article" date="2009" name="Proc. Natl. Acad. Sci. U.S.A.">
        <title>Characterizing a model human gut microbiota composed of members of its two dominant bacterial phyla.</title>
        <authorList>
            <person name="Mahowald M.A."/>
            <person name="Rey F.E."/>
            <person name="Seedorf H."/>
            <person name="Turnbaugh P.J."/>
            <person name="Fulton R.S."/>
            <person name="Wollam A."/>
            <person name="Shah N."/>
            <person name="Wang C."/>
            <person name="Magrini V."/>
            <person name="Wilson R.K."/>
            <person name="Cantarel B.L."/>
            <person name="Coutinho P.M."/>
            <person name="Henrissat B."/>
            <person name="Crock L.W."/>
            <person name="Russell A."/>
            <person name="Verberkmoes N.C."/>
            <person name="Hettich R.L."/>
            <person name="Gordon J.I."/>
        </authorList>
    </citation>
    <scope>NUCLEOTIDE SEQUENCE [LARGE SCALE GENOMIC DNA]</scope>
    <source>
        <strain>ATCC 33656 / DSM 3377 / JCM 17463 / KCTC 5835 / LMG 30912 / VPI 0990</strain>
    </source>
</reference>
<protein>
    <recommendedName>
        <fullName evidence="1">Xanthine phosphoribosyltransferase</fullName>
        <shortName evidence="1">XPRTase</shortName>
        <ecNumber evidence="1">2.4.2.22</ecNumber>
    </recommendedName>
</protein>
<accession>C4ZA66</accession>
<gene>
    <name evidence="1" type="primary">xpt</name>
    <name type="ordered locus">EUBREC_1763</name>
</gene>
<proteinExistence type="inferred from homology"/>
<comment type="function">
    <text evidence="1">Converts the preformed base xanthine, a product of nucleic acid breakdown, to xanthosine 5'-monophosphate (XMP), so it can be reused for RNA or DNA synthesis.</text>
</comment>
<comment type="catalytic activity">
    <reaction evidence="1">
        <text>XMP + diphosphate = xanthine + 5-phospho-alpha-D-ribose 1-diphosphate</text>
        <dbReference type="Rhea" id="RHEA:10800"/>
        <dbReference type="ChEBI" id="CHEBI:17712"/>
        <dbReference type="ChEBI" id="CHEBI:33019"/>
        <dbReference type="ChEBI" id="CHEBI:57464"/>
        <dbReference type="ChEBI" id="CHEBI:58017"/>
        <dbReference type="EC" id="2.4.2.22"/>
    </reaction>
</comment>
<comment type="pathway">
    <text evidence="1">Purine metabolism; XMP biosynthesis via salvage pathway; XMP from xanthine: step 1/1.</text>
</comment>
<comment type="subunit">
    <text evidence="1">Homodimer.</text>
</comment>
<comment type="subcellular location">
    <subcellularLocation>
        <location evidence="1">Cytoplasm</location>
    </subcellularLocation>
</comment>
<comment type="similarity">
    <text evidence="1">Belongs to the purine/pyrimidine phosphoribosyltransferase family. Xpt subfamily.</text>
</comment>
<dbReference type="EC" id="2.4.2.22" evidence="1"/>
<dbReference type="EMBL" id="CP001107">
    <property type="protein sequence ID" value="ACR75507.1"/>
    <property type="molecule type" value="Genomic_DNA"/>
</dbReference>
<dbReference type="RefSeq" id="WP_012742605.1">
    <property type="nucleotide sequence ID" value="NC_012781.1"/>
</dbReference>
<dbReference type="SMR" id="C4ZA66"/>
<dbReference type="STRING" id="515619.EUBREC_1763"/>
<dbReference type="PaxDb" id="515619-EUBREC_1763"/>
<dbReference type="KEGG" id="ere:EUBREC_1763"/>
<dbReference type="HOGENOM" id="CLU_099015_0_0_9"/>
<dbReference type="UniPathway" id="UPA00602">
    <property type="reaction ID" value="UER00658"/>
</dbReference>
<dbReference type="Proteomes" id="UP000001477">
    <property type="component" value="Chromosome"/>
</dbReference>
<dbReference type="GO" id="GO:0005737">
    <property type="term" value="C:cytoplasm"/>
    <property type="evidence" value="ECO:0007669"/>
    <property type="project" value="UniProtKB-SubCell"/>
</dbReference>
<dbReference type="GO" id="GO:0000310">
    <property type="term" value="F:xanthine phosphoribosyltransferase activity"/>
    <property type="evidence" value="ECO:0007669"/>
    <property type="project" value="UniProtKB-UniRule"/>
</dbReference>
<dbReference type="GO" id="GO:0006166">
    <property type="term" value="P:purine ribonucleoside salvage"/>
    <property type="evidence" value="ECO:0007669"/>
    <property type="project" value="UniProtKB-KW"/>
</dbReference>
<dbReference type="GO" id="GO:0046110">
    <property type="term" value="P:xanthine metabolic process"/>
    <property type="evidence" value="ECO:0007669"/>
    <property type="project" value="InterPro"/>
</dbReference>
<dbReference type="GO" id="GO:0032265">
    <property type="term" value="P:XMP salvage"/>
    <property type="evidence" value="ECO:0007669"/>
    <property type="project" value="UniProtKB-UniRule"/>
</dbReference>
<dbReference type="CDD" id="cd06223">
    <property type="entry name" value="PRTases_typeI"/>
    <property type="match status" value="1"/>
</dbReference>
<dbReference type="Gene3D" id="3.40.50.2020">
    <property type="match status" value="1"/>
</dbReference>
<dbReference type="HAMAP" id="MF_01184">
    <property type="entry name" value="XPRTase"/>
    <property type="match status" value="1"/>
</dbReference>
<dbReference type="InterPro" id="IPR000836">
    <property type="entry name" value="PRibTrfase_dom"/>
</dbReference>
<dbReference type="InterPro" id="IPR029057">
    <property type="entry name" value="PRTase-like"/>
</dbReference>
<dbReference type="InterPro" id="IPR050118">
    <property type="entry name" value="Pur/Pyrimidine_PRTase"/>
</dbReference>
<dbReference type="InterPro" id="IPR010079">
    <property type="entry name" value="Xanthine_PRibTrfase"/>
</dbReference>
<dbReference type="NCBIfam" id="NF006671">
    <property type="entry name" value="PRK09219.1"/>
    <property type="match status" value="1"/>
</dbReference>
<dbReference type="NCBIfam" id="TIGR01744">
    <property type="entry name" value="XPRTase"/>
    <property type="match status" value="1"/>
</dbReference>
<dbReference type="PANTHER" id="PTHR43864">
    <property type="entry name" value="HYPOXANTHINE/GUANINE PHOSPHORIBOSYLTRANSFERASE"/>
    <property type="match status" value="1"/>
</dbReference>
<dbReference type="PANTHER" id="PTHR43864:SF1">
    <property type="entry name" value="XANTHINE PHOSPHORIBOSYLTRANSFERASE"/>
    <property type="match status" value="1"/>
</dbReference>
<dbReference type="Pfam" id="PF00156">
    <property type="entry name" value="Pribosyltran"/>
    <property type="match status" value="1"/>
</dbReference>
<dbReference type="SUPFAM" id="SSF53271">
    <property type="entry name" value="PRTase-like"/>
    <property type="match status" value="1"/>
</dbReference>
<keyword id="KW-0963">Cytoplasm</keyword>
<keyword id="KW-0328">Glycosyltransferase</keyword>
<keyword id="KW-0660">Purine salvage</keyword>
<keyword id="KW-0808">Transferase</keyword>
<evidence type="ECO:0000255" key="1">
    <source>
        <dbReference type="HAMAP-Rule" id="MF_01184"/>
    </source>
</evidence>
<organism>
    <name type="scientific">Agathobacter rectalis (strain ATCC 33656 / DSM 3377 / JCM 17463 / KCTC 5835 / VPI 0990)</name>
    <name type="common">Eubacterium rectale</name>
    <dbReference type="NCBI Taxonomy" id="515619"/>
    <lineage>
        <taxon>Bacteria</taxon>
        <taxon>Bacillati</taxon>
        <taxon>Bacillota</taxon>
        <taxon>Clostridia</taxon>
        <taxon>Lachnospirales</taxon>
        <taxon>Lachnospiraceae</taxon>
        <taxon>Agathobacter</taxon>
    </lineage>
</organism>
<sequence length="192" mass="21570">MKELQDRILKDGQVIGTNILKVNKFINHQVDPVLMEHIGEDFANHFADKGITKVVTIESSGIAPALMAAAKMNVPLVILKKQPSKTLHNDLYQTQVTSFTTEKSYELTLSRDVISEDDNILLIDDFMADGEAATGAIRLLRMAHATVAGIGILIEKSFQPGRRKINEQGYEVYSLARIKYMDEYQIDFIEEN</sequence>
<feature type="chain" id="PRO_1000213766" description="Xanthine phosphoribosyltransferase">
    <location>
        <begin position="1"/>
        <end position="192"/>
    </location>
</feature>
<feature type="binding site" evidence="1">
    <location>
        <position position="20"/>
    </location>
    <ligand>
        <name>xanthine</name>
        <dbReference type="ChEBI" id="CHEBI:17712"/>
    </ligand>
</feature>
<feature type="binding site" evidence="1">
    <location>
        <position position="27"/>
    </location>
    <ligand>
        <name>xanthine</name>
        <dbReference type="ChEBI" id="CHEBI:17712"/>
    </ligand>
</feature>
<feature type="binding site" evidence="1">
    <location>
        <begin position="128"/>
        <end position="132"/>
    </location>
    <ligand>
        <name>5-phospho-alpha-D-ribose 1-diphosphate</name>
        <dbReference type="ChEBI" id="CHEBI:58017"/>
    </ligand>
</feature>
<feature type="binding site" evidence="1">
    <location>
        <position position="156"/>
    </location>
    <ligand>
        <name>xanthine</name>
        <dbReference type="ChEBI" id="CHEBI:17712"/>
    </ligand>
</feature>